<comment type="function">
    <text>Involved in oxygen transport from the lung to the various peripheral tissues.</text>
</comment>
<comment type="subunit">
    <text>Heterotetramer of two alpha-D chains and two beta chains.</text>
</comment>
<comment type="tissue specificity">
    <text>Red blood cells.</text>
</comment>
<comment type="developmental stage">
    <text>In birds, the alpha-D chain occurs in a minor hemoglobin component, called hemoglobin d, which is expressed in late embryonic and adult life.</text>
</comment>
<comment type="similarity">
    <text evidence="1">Belongs to the globin family.</text>
</comment>
<organism>
    <name type="scientific">Anser anser anser</name>
    <name type="common">Western greylag goose</name>
    <dbReference type="NCBI Taxonomy" id="8844"/>
    <lineage>
        <taxon>Eukaryota</taxon>
        <taxon>Metazoa</taxon>
        <taxon>Chordata</taxon>
        <taxon>Craniata</taxon>
        <taxon>Vertebrata</taxon>
        <taxon>Euteleostomi</taxon>
        <taxon>Archelosauria</taxon>
        <taxon>Archosauria</taxon>
        <taxon>Dinosauria</taxon>
        <taxon>Saurischia</taxon>
        <taxon>Theropoda</taxon>
        <taxon>Coelurosauria</taxon>
        <taxon>Aves</taxon>
        <taxon>Neognathae</taxon>
        <taxon>Galloanserae</taxon>
        <taxon>Anseriformes</taxon>
        <taxon>Anatidae</taxon>
        <taxon>Anserinae</taxon>
        <taxon>Anser</taxon>
    </lineage>
</organism>
<accession>P04238</accession>
<gene>
    <name type="primary">HBAD</name>
</gene>
<evidence type="ECO:0000255" key="1">
    <source>
        <dbReference type="PROSITE-ProRule" id="PRU00238"/>
    </source>
</evidence>
<proteinExistence type="evidence at protein level"/>
<sequence length="141" mass="15773">MLTADDKKLLAQLWEKVAGHQDEFGNEALQRMFVTYPQTKTYFPHFDLHPGSEQVRSHGKKVAAALGNAVKSLDNISQALSELSNLHAYNLRVDPANFKLLSQCFQVVLAVHLGKDYTPEMHAAFDKFLSAVAAVLAEKYR</sequence>
<dbReference type="PIR" id="A02326">
    <property type="entry name" value="HAGSD"/>
</dbReference>
<dbReference type="SMR" id="P04238"/>
<dbReference type="GO" id="GO:0072562">
    <property type="term" value="C:blood microparticle"/>
    <property type="evidence" value="ECO:0007669"/>
    <property type="project" value="TreeGrafter"/>
</dbReference>
<dbReference type="GO" id="GO:0031838">
    <property type="term" value="C:haptoglobin-hemoglobin complex"/>
    <property type="evidence" value="ECO:0007669"/>
    <property type="project" value="TreeGrafter"/>
</dbReference>
<dbReference type="GO" id="GO:0005833">
    <property type="term" value="C:hemoglobin complex"/>
    <property type="evidence" value="ECO:0007669"/>
    <property type="project" value="InterPro"/>
</dbReference>
<dbReference type="GO" id="GO:0031720">
    <property type="term" value="F:haptoglobin binding"/>
    <property type="evidence" value="ECO:0007669"/>
    <property type="project" value="TreeGrafter"/>
</dbReference>
<dbReference type="GO" id="GO:0020037">
    <property type="term" value="F:heme binding"/>
    <property type="evidence" value="ECO:0007669"/>
    <property type="project" value="InterPro"/>
</dbReference>
<dbReference type="GO" id="GO:0005506">
    <property type="term" value="F:iron ion binding"/>
    <property type="evidence" value="ECO:0007669"/>
    <property type="project" value="InterPro"/>
</dbReference>
<dbReference type="GO" id="GO:0043177">
    <property type="term" value="F:organic acid binding"/>
    <property type="evidence" value="ECO:0007669"/>
    <property type="project" value="TreeGrafter"/>
</dbReference>
<dbReference type="GO" id="GO:0019825">
    <property type="term" value="F:oxygen binding"/>
    <property type="evidence" value="ECO:0007669"/>
    <property type="project" value="InterPro"/>
</dbReference>
<dbReference type="GO" id="GO:0005344">
    <property type="term" value="F:oxygen carrier activity"/>
    <property type="evidence" value="ECO:0007669"/>
    <property type="project" value="UniProtKB-KW"/>
</dbReference>
<dbReference type="GO" id="GO:0004601">
    <property type="term" value="F:peroxidase activity"/>
    <property type="evidence" value="ECO:0007669"/>
    <property type="project" value="TreeGrafter"/>
</dbReference>
<dbReference type="GO" id="GO:0042744">
    <property type="term" value="P:hydrogen peroxide catabolic process"/>
    <property type="evidence" value="ECO:0007669"/>
    <property type="project" value="TreeGrafter"/>
</dbReference>
<dbReference type="CDD" id="cd08927">
    <property type="entry name" value="Hb-alpha-like"/>
    <property type="match status" value="1"/>
</dbReference>
<dbReference type="FunFam" id="1.10.490.10:FF:000002">
    <property type="entry name" value="Hemoglobin subunit alpha"/>
    <property type="match status" value="1"/>
</dbReference>
<dbReference type="Gene3D" id="1.10.490.10">
    <property type="entry name" value="Globins"/>
    <property type="match status" value="1"/>
</dbReference>
<dbReference type="InterPro" id="IPR000971">
    <property type="entry name" value="Globin"/>
</dbReference>
<dbReference type="InterPro" id="IPR009050">
    <property type="entry name" value="Globin-like_sf"/>
</dbReference>
<dbReference type="InterPro" id="IPR012292">
    <property type="entry name" value="Globin/Proto"/>
</dbReference>
<dbReference type="InterPro" id="IPR002338">
    <property type="entry name" value="Hemoglobin_a-typ"/>
</dbReference>
<dbReference type="InterPro" id="IPR050056">
    <property type="entry name" value="Hemoglobin_oxygen_transport"/>
</dbReference>
<dbReference type="InterPro" id="IPR002340">
    <property type="entry name" value="Hemoglobin_zeta"/>
</dbReference>
<dbReference type="PANTHER" id="PTHR11442">
    <property type="entry name" value="HEMOGLOBIN FAMILY MEMBER"/>
    <property type="match status" value="1"/>
</dbReference>
<dbReference type="PANTHER" id="PTHR11442:SF41">
    <property type="entry name" value="HEMOGLOBIN SUBUNIT ZETA"/>
    <property type="match status" value="1"/>
</dbReference>
<dbReference type="Pfam" id="PF00042">
    <property type="entry name" value="Globin"/>
    <property type="match status" value="1"/>
</dbReference>
<dbReference type="PRINTS" id="PR00612">
    <property type="entry name" value="ALPHAHAEM"/>
</dbReference>
<dbReference type="PRINTS" id="PR00816">
    <property type="entry name" value="ZETAHAEM"/>
</dbReference>
<dbReference type="SUPFAM" id="SSF46458">
    <property type="entry name" value="Globin-like"/>
    <property type="match status" value="1"/>
</dbReference>
<dbReference type="PROSITE" id="PS01033">
    <property type="entry name" value="GLOBIN"/>
    <property type="match status" value="1"/>
</dbReference>
<feature type="chain" id="PRO_0000052817" description="Hemoglobin subunit alpha-D">
    <location>
        <begin position="1"/>
        <end position="141"/>
    </location>
</feature>
<feature type="domain" description="Globin" evidence="1">
    <location>
        <begin position="1"/>
        <end position="141"/>
    </location>
</feature>
<feature type="binding site" description="distal binding residue">
    <location>
        <position position="58"/>
    </location>
    <ligand>
        <name>heme b</name>
        <dbReference type="ChEBI" id="CHEBI:60344"/>
    </ligand>
    <ligandPart>
        <name>Fe</name>
        <dbReference type="ChEBI" id="CHEBI:18248"/>
    </ligandPart>
</feature>
<feature type="binding site" description="proximal binding residue">
    <location>
        <position position="87"/>
    </location>
    <ligand>
        <name>heme b</name>
        <dbReference type="ChEBI" id="CHEBI:60344"/>
    </ligand>
    <ligandPart>
        <name>Fe</name>
        <dbReference type="ChEBI" id="CHEBI:18248"/>
    </ligandPart>
</feature>
<name>HBAD_ANSAN</name>
<protein>
    <recommendedName>
        <fullName>Hemoglobin subunit alpha-D</fullName>
    </recommendedName>
    <alternativeName>
        <fullName>Alpha-D-globin</fullName>
    </alternativeName>
    <alternativeName>
        <fullName>Hemoglobin alpha-D chain</fullName>
    </alternativeName>
</protein>
<reference key="1">
    <citation type="journal article" date="1986" name="Biol. Chem. Hoppe-Seyler">
        <title>High-altitude respiration of birds. The primary structures of the alpha D-chains of the Bar-headed Goose (Anser indicus), the Greylag Goose(Anser anser) and the Canada Goose (Branta canadensis).</title>
        <authorList>
            <person name="Hiebl I."/>
            <person name="Schneeganss D."/>
            <person name="Braunitzer G."/>
        </authorList>
    </citation>
    <scope>PROTEIN SEQUENCE</scope>
</reference>
<keyword id="KW-0903">Direct protein sequencing</keyword>
<keyword id="KW-0349">Heme</keyword>
<keyword id="KW-0408">Iron</keyword>
<keyword id="KW-0479">Metal-binding</keyword>
<keyword id="KW-0561">Oxygen transport</keyword>
<keyword id="KW-0813">Transport</keyword>